<geneLocation type="mitochondrion"/>
<keyword id="KW-0249">Electron transport</keyword>
<keyword id="KW-0349">Heme</keyword>
<keyword id="KW-0408">Iron</keyword>
<keyword id="KW-0472">Membrane</keyword>
<keyword id="KW-0479">Metal-binding</keyword>
<keyword id="KW-0496">Mitochondrion</keyword>
<keyword id="KW-0999">Mitochondrion inner membrane</keyword>
<keyword id="KW-0679">Respiratory chain</keyword>
<keyword id="KW-0812">Transmembrane</keyword>
<keyword id="KW-1133">Transmembrane helix</keyword>
<keyword id="KW-0813">Transport</keyword>
<keyword id="KW-0830">Ubiquinone</keyword>
<comment type="function">
    <text evidence="2">Component of the ubiquinol-cytochrome c reductase complex (complex III or cytochrome b-c1 complex) that is part of the mitochondrial respiratory chain. The b-c1 complex mediates electron transfer from ubiquinol to cytochrome c. Contributes to the generation of a proton gradient across the mitochondrial membrane that is then used for ATP synthesis.</text>
</comment>
<comment type="cofactor">
    <cofactor evidence="2">
        <name>heme b</name>
        <dbReference type="ChEBI" id="CHEBI:60344"/>
    </cofactor>
    <text evidence="2">Binds 2 heme b groups non-covalently.</text>
</comment>
<comment type="subunit">
    <text evidence="2">The cytochrome bc1 complex contains 11 subunits: 3 respiratory subunits (MT-CYB, CYC1 and UQCRFS1), 2 core proteins (UQCRC1 and UQCRC2) and 6 low-molecular weight proteins (UQCRH/QCR6, UQCRB/QCR7, UQCRQ/QCR8, UQCR10/QCR9, UQCR11/QCR10 and a cleavage product of UQCRFS1). This cytochrome bc1 complex then forms a dimer.</text>
</comment>
<comment type="subcellular location">
    <subcellularLocation>
        <location evidence="2">Mitochondrion inner membrane</location>
        <topology evidence="2">Multi-pass membrane protein</topology>
    </subcellularLocation>
</comment>
<comment type="miscellaneous">
    <text evidence="1">Heme 1 (or BL or b562) is low-potential and absorbs at about 562 nm, and heme 2 (or BH or b566) is high-potential and absorbs at about 566 nm.</text>
</comment>
<comment type="similarity">
    <text evidence="3 4">Belongs to the cytochrome b family.</text>
</comment>
<comment type="caution">
    <text evidence="2">The full-length protein contains only eight transmembrane helices, not nine as predicted by bioinformatics tools.</text>
</comment>
<feature type="chain" id="PRO_0000061461" description="Cytochrome b">
    <location>
        <begin position="1"/>
        <end position="379"/>
    </location>
</feature>
<feature type="transmembrane region" description="Helical" evidence="2">
    <location>
        <begin position="33"/>
        <end position="53"/>
    </location>
</feature>
<feature type="transmembrane region" description="Helical" evidence="2">
    <location>
        <begin position="77"/>
        <end position="98"/>
    </location>
</feature>
<feature type="transmembrane region" description="Helical" evidence="2">
    <location>
        <begin position="113"/>
        <end position="133"/>
    </location>
</feature>
<feature type="transmembrane region" description="Helical" evidence="2">
    <location>
        <begin position="178"/>
        <end position="198"/>
    </location>
</feature>
<feature type="transmembrane region" description="Helical" evidence="2">
    <location>
        <begin position="226"/>
        <end position="246"/>
    </location>
</feature>
<feature type="transmembrane region" description="Helical" evidence="2">
    <location>
        <begin position="288"/>
        <end position="308"/>
    </location>
</feature>
<feature type="transmembrane region" description="Helical" evidence="2">
    <location>
        <begin position="320"/>
        <end position="340"/>
    </location>
</feature>
<feature type="transmembrane region" description="Helical" evidence="2">
    <location>
        <begin position="347"/>
        <end position="367"/>
    </location>
</feature>
<feature type="binding site" description="axial binding residue" evidence="2">
    <location>
        <position position="83"/>
    </location>
    <ligand>
        <name>heme b</name>
        <dbReference type="ChEBI" id="CHEBI:60344"/>
        <label>b562</label>
    </ligand>
    <ligandPart>
        <name>Fe</name>
        <dbReference type="ChEBI" id="CHEBI:18248"/>
    </ligandPart>
</feature>
<feature type="binding site" description="axial binding residue" evidence="2">
    <location>
        <position position="97"/>
    </location>
    <ligand>
        <name>heme b</name>
        <dbReference type="ChEBI" id="CHEBI:60344"/>
        <label>b566</label>
    </ligand>
    <ligandPart>
        <name>Fe</name>
        <dbReference type="ChEBI" id="CHEBI:18248"/>
    </ligandPart>
</feature>
<feature type="binding site" description="axial binding residue" evidence="2">
    <location>
        <position position="182"/>
    </location>
    <ligand>
        <name>heme b</name>
        <dbReference type="ChEBI" id="CHEBI:60344"/>
        <label>b562</label>
    </ligand>
    <ligandPart>
        <name>Fe</name>
        <dbReference type="ChEBI" id="CHEBI:18248"/>
    </ligandPart>
</feature>
<feature type="binding site" description="axial binding residue" evidence="2">
    <location>
        <position position="196"/>
    </location>
    <ligand>
        <name>heme b</name>
        <dbReference type="ChEBI" id="CHEBI:60344"/>
        <label>b566</label>
    </ligand>
    <ligandPart>
        <name>Fe</name>
        <dbReference type="ChEBI" id="CHEBI:18248"/>
    </ligandPart>
</feature>
<feature type="binding site" evidence="2">
    <location>
        <position position="201"/>
    </location>
    <ligand>
        <name>a ubiquinone</name>
        <dbReference type="ChEBI" id="CHEBI:16389"/>
    </ligand>
</feature>
<reference key="1">
    <citation type="journal article" date="2001" name="Can. J. Zool.">
        <title>Phylogenetic relationships among megachiropteran species from the two major islands of the Philippines, deduced from DNA sequences of the cytochrome b gene.</title>
        <authorList>
            <person name="Bastian S.T. Jr."/>
            <person name="Tanaka K."/>
            <person name="Anunciado R.V.P."/>
            <person name="Natural N.G."/>
            <person name="Sumalde A.C."/>
            <person name="Namikawa T."/>
        </authorList>
    </citation>
    <scope>NUCLEOTIDE SEQUENCE [GENOMIC DNA]</scope>
</reference>
<protein>
    <recommendedName>
        <fullName>Cytochrome b</fullName>
    </recommendedName>
    <alternativeName>
        <fullName>Complex III subunit 3</fullName>
    </alternativeName>
    <alternativeName>
        <fullName>Complex III subunit III</fullName>
    </alternativeName>
    <alternativeName>
        <fullName>Cytochrome b-c1 complex subunit 3</fullName>
    </alternativeName>
    <alternativeName>
        <fullName>Ubiquinol-cytochrome-c reductase complex cytochrome b subunit</fullName>
    </alternativeName>
</protein>
<organism>
    <name type="scientific">Ptenochirus jagorii</name>
    <name type="common">Greater musky fruit bat</name>
    <name type="synonym">Pachysoma jagorii</name>
    <dbReference type="NCBI Taxonomy" id="2933645"/>
    <lineage>
        <taxon>Eukaryota</taxon>
        <taxon>Metazoa</taxon>
        <taxon>Chordata</taxon>
        <taxon>Craniata</taxon>
        <taxon>Vertebrata</taxon>
        <taxon>Euteleostomi</taxon>
        <taxon>Mammalia</taxon>
        <taxon>Eutheria</taxon>
        <taxon>Laurasiatheria</taxon>
        <taxon>Chiroptera</taxon>
        <taxon>Yinpterochiroptera</taxon>
        <taxon>Pteropodoidea</taxon>
        <taxon>Pteropodidae</taxon>
        <taxon>Cynopterinae</taxon>
        <taxon>Ptenochirus</taxon>
    </lineage>
</organism>
<proteinExistence type="inferred from homology"/>
<gene>
    <name type="primary">MT-CYB</name>
    <name type="synonym">COB</name>
    <name type="synonym">CYTB</name>
    <name type="synonym">MTCYB</name>
</gene>
<name>CYB_PTEJA</name>
<sequence>MTNIRKSHPLFKLINDALIDLPAPSNISSWWNFGSLLGICLLIQILTGLFLAMHYTSDTATAFQSVTHICRDVNYGWILRYLHANGASMFFICLFLHVGRGLYYGSYIYTETWNVGILLLFAVMATAFMGYVLPWGQMSFWGATVITNLLSAIPYIGTNLVEWIWGGFSVDKATLTRFFAFHFLLPFIISALVVVHLLFLHETGSNNPTGIPSDMDMIPFHPYYTIKDMLGALIMILALLLLVLFSPDLLGDPDNYIPANPLNTPPHIKPEWYFLFAYAILRSIPNKLGGVLALVLSILILALMPLLHTSKQRSMMFRPLSQCMFWLLVADLLTLTWIGGQPVEHPFIIIGQLASILYFLLILVLMPLVSIVENHLLKW</sequence>
<evidence type="ECO:0000250" key="1"/>
<evidence type="ECO:0000250" key="2">
    <source>
        <dbReference type="UniProtKB" id="P00157"/>
    </source>
</evidence>
<evidence type="ECO:0000255" key="3">
    <source>
        <dbReference type="PROSITE-ProRule" id="PRU00967"/>
    </source>
</evidence>
<evidence type="ECO:0000255" key="4">
    <source>
        <dbReference type="PROSITE-ProRule" id="PRU00968"/>
    </source>
</evidence>
<accession>Q94YL4</accession>
<dbReference type="EMBL" id="AB046325">
    <property type="protein sequence ID" value="BAB67837.1"/>
    <property type="molecule type" value="Genomic_DNA"/>
</dbReference>
<dbReference type="SMR" id="Q94YL4"/>
<dbReference type="GO" id="GO:0005743">
    <property type="term" value="C:mitochondrial inner membrane"/>
    <property type="evidence" value="ECO:0007669"/>
    <property type="project" value="UniProtKB-SubCell"/>
</dbReference>
<dbReference type="GO" id="GO:0045275">
    <property type="term" value="C:respiratory chain complex III"/>
    <property type="evidence" value="ECO:0007669"/>
    <property type="project" value="InterPro"/>
</dbReference>
<dbReference type="GO" id="GO:0046872">
    <property type="term" value="F:metal ion binding"/>
    <property type="evidence" value="ECO:0007669"/>
    <property type="project" value="UniProtKB-KW"/>
</dbReference>
<dbReference type="GO" id="GO:0008121">
    <property type="term" value="F:ubiquinol-cytochrome-c reductase activity"/>
    <property type="evidence" value="ECO:0007669"/>
    <property type="project" value="InterPro"/>
</dbReference>
<dbReference type="GO" id="GO:0006122">
    <property type="term" value="P:mitochondrial electron transport, ubiquinol to cytochrome c"/>
    <property type="evidence" value="ECO:0007669"/>
    <property type="project" value="TreeGrafter"/>
</dbReference>
<dbReference type="CDD" id="cd00290">
    <property type="entry name" value="cytochrome_b_C"/>
    <property type="match status" value="1"/>
</dbReference>
<dbReference type="CDD" id="cd00284">
    <property type="entry name" value="Cytochrome_b_N"/>
    <property type="match status" value="1"/>
</dbReference>
<dbReference type="FunFam" id="1.20.810.10:FF:000002">
    <property type="entry name" value="Cytochrome b"/>
    <property type="match status" value="1"/>
</dbReference>
<dbReference type="Gene3D" id="1.20.810.10">
    <property type="entry name" value="Cytochrome Bc1 Complex, Chain C"/>
    <property type="match status" value="1"/>
</dbReference>
<dbReference type="InterPro" id="IPR005798">
    <property type="entry name" value="Cyt_b/b6_C"/>
</dbReference>
<dbReference type="InterPro" id="IPR036150">
    <property type="entry name" value="Cyt_b/b6_C_sf"/>
</dbReference>
<dbReference type="InterPro" id="IPR005797">
    <property type="entry name" value="Cyt_b/b6_N"/>
</dbReference>
<dbReference type="InterPro" id="IPR027387">
    <property type="entry name" value="Cytb/b6-like_sf"/>
</dbReference>
<dbReference type="InterPro" id="IPR030689">
    <property type="entry name" value="Cytochrome_b"/>
</dbReference>
<dbReference type="InterPro" id="IPR048260">
    <property type="entry name" value="Cytochrome_b_C_euk/bac"/>
</dbReference>
<dbReference type="InterPro" id="IPR048259">
    <property type="entry name" value="Cytochrome_b_N_euk/bac"/>
</dbReference>
<dbReference type="InterPro" id="IPR016174">
    <property type="entry name" value="Di-haem_cyt_TM"/>
</dbReference>
<dbReference type="PANTHER" id="PTHR19271">
    <property type="entry name" value="CYTOCHROME B"/>
    <property type="match status" value="1"/>
</dbReference>
<dbReference type="PANTHER" id="PTHR19271:SF16">
    <property type="entry name" value="CYTOCHROME B"/>
    <property type="match status" value="1"/>
</dbReference>
<dbReference type="Pfam" id="PF00032">
    <property type="entry name" value="Cytochrom_B_C"/>
    <property type="match status" value="1"/>
</dbReference>
<dbReference type="Pfam" id="PF00033">
    <property type="entry name" value="Cytochrome_B"/>
    <property type="match status" value="1"/>
</dbReference>
<dbReference type="PIRSF" id="PIRSF038885">
    <property type="entry name" value="COB"/>
    <property type="match status" value="1"/>
</dbReference>
<dbReference type="SUPFAM" id="SSF81648">
    <property type="entry name" value="a domain/subunit of cytochrome bc1 complex (Ubiquinol-cytochrome c reductase)"/>
    <property type="match status" value="1"/>
</dbReference>
<dbReference type="SUPFAM" id="SSF81342">
    <property type="entry name" value="Transmembrane di-heme cytochromes"/>
    <property type="match status" value="1"/>
</dbReference>
<dbReference type="PROSITE" id="PS51003">
    <property type="entry name" value="CYTB_CTER"/>
    <property type="match status" value="1"/>
</dbReference>
<dbReference type="PROSITE" id="PS51002">
    <property type="entry name" value="CYTB_NTER"/>
    <property type="match status" value="1"/>
</dbReference>